<accession>Q5XDH0</accession>
<dbReference type="EMBL" id="CP000003">
    <property type="protein sequence ID" value="AAT86543.1"/>
    <property type="status" value="ALT_INIT"/>
    <property type="molecule type" value="Genomic_DNA"/>
</dbReference>
<dbReference type="RefSeq" id="WP_002985757.1">
    <property type="nucleotide sequence ID" value="NC_006086.1"/>
</dbReference>
<dbReference type="SMR" id="Q5XDH0"/>
<dbReference type="KEGG" id="spa:M6_Spy0408"/>
<dbReference type="HOGENOM" id="CLU_177534_1_0_9"/>
<dbReference type="Proteomes" id="UP000001167">
    <property type="component" value="Chromosome"/>
</dbReference>
<dbReference type="Gene3D" id="1.10.150.260">
    <property type="entry name" value="YozE SAM-like"/>
    <property type="match status" value="1"/>
</dbReference>
<dbReference type="HAMAP" id="MF_01538">
    <property type="entry name" value="UPF0346"/>
    <property type="match status" value="1"/>
</dbReference>
<dbReference type="InterPro" id="IPR010673">
    <property type="entry name" value="UPF0346"/>
</dbReference>
<dbReference type="InterPro" id="IPR023089">
    <property type="entry name" value="YozE_SAM-like"/>
</dbReference>
<dbReference type="InterPro" id="IPR036806">
    <property type="entry name" value="YozE_SAM-like_sf"/>
</dbReference>
<dbReference type="NCBIfam" id="NF010193">
    <property type="entry name" value="PRK13672.1"/>
    <property type="match status" value="1"/>
</dbReference>
<dbReference type="Pfam" id="PF06855">
    <property type="entry name" value="YozE_SAM_like"/>
    <property type="match status" value="1"/>
</dbReference>
<dbReference type="PIRSF" id="PIRSF037262">
    <property type="entry name" value="UCP037262"/>
    <property type="match status" value="1"/>
</dbReference>
<dbReference type="SUPFAM" id="SSF140652">
    <property type="entry name" value="YozE-like"/>
    <property type="match status" value="1"/>
</dbReference>
<protein>
    <recommendedName>
        <fullName evidence="1">UPF0346 protein M6_Spy0408</fullName>
    </recommendedName>
</protein>
<evidence type="ECO:0000255" key="1">
    <source>
        <dbReference type="HAMAP-Rule" id="MF_01538"/>
    </source>
</evidence>
<evidence type="ECO:0000305" key="2"/>
<sequence>MRKSFYSWLMTQRNPKSNEPVAILADLVFDDTTFPKHTNDFELISRYLEDQASFSFNLGQFDEIWEDYLAH</sequence>
<organism>
    <name type="scientific">Streptococcus pyogenes serotype M6 (strain ATCC BAA-946 / MGAS10394)</name>
    <dbReference type="NCBI Taxonomy" id="286636"/>
    <lineage>
        <taxon>Bacteria</taxon>
        <taxon>Bacillati</taxon>
        <taxon>Bacillota</taxon>
        <taxon>Bacilli</taxon>
        <taxon>Lactobacillales</taxon>
        <taxon>Streptococcaceae</taxon>
        <taxon>Streptococcus</taxon>
    </lineage>
</organism>
<gene>
    <name type="ordered locus">M6_Spy0408</name>
</gene>
<proteinExistence type="inferred from homology"/>
<comment type="similarity">
    <text evidence="1">Belongs to the UPF0346 family.</text>
</comment>
<comment type="sequence caution" evidence="2">
    <conflict type="erroneous initiation">
        <sequence resource="EMBL-CDS" id="AAT86543"/>
    </conflict>
</comment>
<reference key="1">
    <citation type="journal article" date="2004" name="J. Infect. Dis.">
        <title>Progress toward characterization of the group A Streptococcus metagenome: complete genome sequence of a macrolide-resistant serotype M6 strain.</title>
        <authorList>
            <person name="Banks D.J."/>
            <person name="Porcella S.F."/>
            <person name="Barbian K.D."/>
            <person name="Beres S.B."/>
            <person name="Philips L.E."/>
            <person name="Voyich J.M."/>
            <person name="DeLeo F.R."/>
            <person name="Martin J.M."/>
            <person name="Somerville G.A."/>
            <person name="Musser J.M."/>
        </authorList>
    </citation>
    <scope>NUCLEOTIDE SEQUENCE [LARGE SCALE GENOMIC DNA]</scope>
    <source>
        <strain>ATCC BAA-946 / MGAS10394</strain>
    </source>
</reference>
<feature type="chain" id="PRO_0000164298" description="UPF0346 protein M6_Spy0408">
    <location>
        <begin position="1"/>
        <end position="71"/>
    </location>
</feature>
<name>Y408_STRP6</name>